<proteinExistence type="inferred from homology"/>
<accession>Q2P2A9</accession>
<evidence type="ECO:0000255" key="1">
    <source>
        <dbReference type="HAMAP-Rule" id="MF_00692"/>
    </source>
</evidence>
<sequence length="518" mass="57747">MTQLHFDNRLRQQLPGYQEEGARRREVRAAWSAVMPTPVAAPYLIAHSAEMAHVLGLDASEVASAAFAQVFGGNALYPGMQPWAVNYGGHQFGHWAGQLGDGRAISLGEAIGIDGGRYELQLKGAGPTPYSRGADGRAVLRSSIREFLCSESMHHLGVPTTRALSLVGTGDAVVRDMFYDGRPQREPGAIVCRVAPSFIRFGNFELPSARGDNALLRQWVDFTIARDFPELVGTAEALYADWFAQVCQRTAVMVAHWMRVGFVHGVMNTDNMSILGLTIDYGPYGWVDDYDPDWTPNTTDAQGRRYRFGTQPQVAYWNLGRLAQAMAPLFADQAPLQQGLNRFRDTYLACDRRDTAAKLGLAECRDEDLELIDALRALMRDAEMDMTLTFRGLIDLSPVHPDPAQLHDAFYDDHKRVASASQLQEWLQRYAARLQQDALSPDERRALMRLANPRYVLRNYLAQQAIDQAEQGDPSGVQELLEVMRRPYDDQSGRAAFAARRPEWARDRAGCSMLSCSS</sequence>
<organism>
    <name type="scientific">Xanthomonas oryzae pv. oryzae (strain MAFF 311018)</name>
    <dbReference type="NCBI Taxonomy" id="342109"/>
    <lineage>
        <taxon>Bacteria</taxon>
        <taxon>Pseudomonadati</taxon>
        <taxon>Pseudomonadota</taxon>
        <taxon>Gammaproteobacteria</taxon>
        <taxon>Lysobacterales</taxon>
        <taxon>Lysobacteraceae</taxon>
        <taxon>Xanthomonas</taxon>
    </lineage>
</organism>
<comment type="function">
    <text evidence="1">Nucleotidyltransferase involved in the post-translational modification of proteins. It can catalyze the addition of adenosine monophosphate (AMP) or uridine monophosphate (UMP) to a protein, resulting in modifications known as AMPylation and UMPylation.</text>
</comment>
<comment type="catalytic activity">
    <reaction evidence="1">
        <text>L-seryl-[protein] + ATP = 3-O-(5'-adenylyl)-L-seryl-[protein] + diphosphate</text>
        <dbReference type="Rhea" id="RHEA:58120"/>
        <dbReference type="Rhea" id="RHEA-COMP:9863"/>
        <dbReference type="Rhea" id="RHEA-COMP:15073"/>
        <dbReference type="ChEBI" id="CHEBI:29999"/>
        <dbReference type="ChEBI" id="CHEBI:30616"/>
        <dbReference type="ChEBI" id="CHEBI:33019"/>
        <dbReference type="ChEBI" id="CHEBI:142516"/>
        <dbReference type="EC" id="2.7.7.108"/>
    </reaction>
</comment>
<comment type="catalytic activity">
    <reaction evidence="1">
        <text>L-threonyl-[protein] + ATP = 3-O-(5'-adenylyl)-L-threonyl-[protein] + diphosphate</text>
        <dbReference type="Rhea" id="RHEA:54292"/>
        <dbReference type="Rhea" id="RHEA-COMP:11060"/>
        <dbReference type="Rhea" id="RHEA-COMP:13847"/>
        <dbReference type="ChEBI" id="CHEBI:30013"/>
        <dbReference type="ChEBI" id="CHEBI:30616"/>
        <dbReference type="ChEBI" id="CHEBI:33019"/>
        <dbReference type="ChEBI" id="CHEBI:138113"/>
        <dbReference type="EC" id="2.7.7.108"/>
    </reaction>
</comment>
<comment type="catalytic activity">
    <reaction evidence="1">
        <text>L-tyrosyl-[protein] + ATP = O-(5'-adenylyl)-L-tyrosyl-[protein] + diphosphate</text>
        <dbReference type="Rhea" id="RHEA:54288"/>
        <dbReference type="Rhea" id="RHEA-COMP:10136"/>
        <dbReference type="Rhea" id="RHEA-COMP:13846"/>
        <dbReference type="ChEBI" id="CHEBI:30616"/>
        <dbReference type="ChEBI" id="CHEBI:33019"/>
        <dbReference type="ChEBI" id="CHEBI:46858"/>
        <dbReference type="ChEBI" id="CHEBI:83624"/>
        <dbReference type="EC" id="2.7.7.108"/>
    </reaction>
</comment>
<comment type="catalytic activity">
    <reaction evidence="1">
        <text>L-histidyl-[protein] + UTP = N(tele)-(5'-uridylyl)-L-histidyl-[protein] + diphosphate</text>
        <dbReference type="Rhea" id="RHEA:83891"/>
        <dbReference type="Rhea" id="RHEA-COMP:9745"/>
        <dbReference type="Rhea" id="RHEA-COMP:20239"/>
        <dbReference type="ChEBI" id="CHEBI:29979"/>
        <dbReference type="ChEBI" id="CHEBI:33019"/>
        <dbReference type="ChEBI" id="CHEBI:46398"/>
        <dbReference type="ChEBI" id="CHEBI:233474"/>
    </reaction>
</comment>
<comment type="catalytic activity">
    <reaction evidence="1">
        <text>L-seryl-[protein] + UTP = O-(5'-uridylyl)-L-seryl-[protein] + diphosphate</text>
        <dbReference type="Rhea" id="RHEA:64604"/>
        <dbReference type="Rhea" id="RHEA-COMP:9863"/>
        <dbReference type="Rhea" id="RHEA-COMP:16635"/>
        <dbReference type="ChEBI" id="CHEBI:29999"/>
        <dbReference type="ChEBI" id="CHEBI:33019"/>
        <dbReference type="ChEBI" id="CHEBI:46398"/>
        <dbReference type="ChEBI" id="CHEBI:156051"/>
    </reaction>
</comment>
<comment type="catalytic activity">
    <reaction evidence="1">
        <text>L-tyrosyl-[protein] + UTP = O-(5'-uridylyl)-L-tyrosyl-[protein] + diphosphate</text>
        <dbReference type="Rhea" id="RHEA:83887"/>
        <dbReference type="Rhea" id="RHEA-COMP:10136"/>
        <dbReference type="Rhea" id="RHEA-COMP:20238"/>
        <dbReference type="ChEBI" id="CHEBI:33019"/>
        <dbReference type="ChEBI" id="CHEBI:46398"/>
        <dbReference type="ChEBI" id="CHEBI:46858"/>
        <dbReference type="ChEBI" id="CHEBI:90602"/>
    </reaction>
</comment>
<comment type="cofactor">
    <cofactor evidence="1">
        <name>Mg(2+)</name>
        <dbReference type="ChEBI" id="CHEBI:18420"/>
    </cofactor>
    <cofactor evidence="1">
        <name>Mn(2+)</name>
        <dbReference type="ChEBI" id="CHEBI:29035"/>
    </cofactor>
</comment>
<comment type="similarity">
    <text evidence="1">Belongs to the SELO family.</text>
</comment>
<name>SELO_XANOM</name>
<dbReference type="EC" id="2.7.7.-" evidence="1"/>
<dbReference type="EC" id="2.7.7.108" evidence="1"/>
<dbReference type="EMBL" id="AP008229">
    <property type="protein sequence ID" value="BAE69318.1"/>
    <property type="molecule type" value="Genomic_DNA"/>
</dbReference>
<dbReference type="RefSeq" id="WP_011408741.1">
    <property type="nucleotide sequence ID" value="NC_007705.1"/>
</dbReference>
<dbReference type="SMR" id="Q2P2A9"/>
<dbReference type="KEGG" id="xom:XOO2563"/>
<dbReference type="HOGENOM" id="CLU_010245_4_0_6"/>
<dbReference type="GO" id="GO:0070733">
    <property type="term" value="F:AMPylase activity"/>
    <property type="evidence" value="ECO:0007669"/>
    <property type="project" value="RHEA"/>
</dbReference>
<dbReference type="GO" id="GO:0005524">
    <property type="term" value="F:ATP binding"/>
    <property type="evidence" value="ECO:0007669"/>
    <property type="project" value="UniProtKB-UniRule"/>
</dbReference>
<dbReference type="GO" id="GO:0000287">
    <property type="term" value="F:magnesium ion binding"/>
    <property type="evidence" value="ECO:0007669"/>
    <property type="project" value="UniProtKB-UniRule"/>
</dbReference>
<dbReference type="HAMAP" id="MF_00692">
    <property type="entry name" value="YdiU_SelO"/>
    <property type="match status" value="1"/>
</dbReference>
<dbReference type="InterPro" id="IPR003846">
    <property type="entry name" value="SelO"/>
</dbReference>
<dbReference type="NCBIfam" id="NF000658">
    <property type="entry name" value="PRK00029.1"/>
    <property type="match status" value="1"/>
</dbReference>
<dbReference type="PANTHER" id="PTHR32057">
    <property type="entry name" value="PROTEIN ADENYLYLTRANSFERASE SELO, MITOCHONDRIAL"/>
    <property type="match status" value="1"/>
</dbReference>
<dbReference type="PANTHER" id="PTHR32057:SF14">
    <property type="entry name" value="PROTEIN ADENYLYLTRANSFERASE SELO, MITOCHONDRIAL"/>
    <property type="match status" value="1"/>
</dbReference>
<dbReference type="Pfam" id="PF02696">
    <property type="entry name" value="SelO"/>
    <property type="match status" value="1"/>
</dbReference>
<protein>
    <recommendedName>
        <fullName evidence="1">Protein nucleotidyltransferase YdiU</fullName>
        <ecNumber evidence="1">2.7.7.-</ecNumber>
    </recommendedName>
    <alternativeName>
        <fullName evidence="1">Protein adenylyltransferase YdiU</fullName>
        <ecNumber evidence="1">2.7.7.108</ecNumber>
    </alternativeName>
    <alternativeName>
        <fullName evidence="1">Protein uridylyltransferase YdiU</fullName>
        <ecNumber evidence="1">2.7.7.-</ecNumber>
    </alternativeName>
</protein>
<gene>
    <name evidence="1" type="primary">ydiU</name>
    <name evidence="1" type="synonym">selO</name>
    <name type="ordered locus">XOO2563</name>
</gene>
<keyword id="KW-0067">ATP-binding</keyword>
<keyword id="KW-0460">Magnesium</keyword>
<keyword id="KW-0464">Manganese</keyword>
<keyword id="KW-0479">Metal-binding</keyword>
<keyword id="KW-0547">Nucleotide-binding</keyword>
<keyword id="KW-0548">Nucleotidyltransferase</keyword>
<keyword id="KW-0808">Transferase</keyword>
<feature type="chain" id="PRO_0000271882" description="Protein nucleotidyltransferase YdiU">
    <location>
        <begin position="1"/>
        <end position="518"/>
    </location>
</feature>
<feature type="active site" description="Proton acceptor" evidence="1">
    <location>
        <position position="270"/>
    </location>
</feature>
<feature type="binding site" evidence="1">
    <location>
        <position position="100"/>
    </location>
    <ligand>
        <name>ATP</name>
        <dbReference type="ChEBI" id="CHEBI:30616"/>
    </ligand>
</feature>
<feature type="binding site" evidence="1">
    <location>
        <position position="102"/>
    </location>
    <ligand>
        <name>ATP</name>
        <dbReference type="ChEBI" id="CHEBI:30616"/>
    </ligand>
</feature>
<feature type="binding site" evidence="1">
    <location>
        <position position="103"/>
    </location>
    <ligand>
        <name>ATP</name>
        <dbReference type="ChEBI" id="CHEBI:30616"/>
    </ligand>
</feature>
<feature type="binding site" evidence="1">
    <location>
        <position position="123"/>
    </location>
    <ligand>
        <name>ATP</name>
        <dbReference type="ChEBI" id="CHEBI:30616"/>
    </ligand>
</feature>
<feature type="binding site" evidence="1">
    <location>
        <position position="135"/>
    </location>
    <ligand>
        <name>ATP</name>
        <dbReference type="ChEBI" id="CHEBI:30616"/>
    </ligand>
</feature>
<feature type="binding site" evidence="1">
    <location>
        <position position="136"/>
    </location>
    <ligand>
        <name>ATP</name>
        <dbReference type="ChEBI" id="CHEBI:30616"/>
    </ligand>
</feature>
<feature type="binding site" evidence="1">
    <location>
        <position position="193"/>
    </location>
    <ligand>
        <name>ATP</name>
        <dbReference type="ChEBI" id="CHEBI:30616"/>
    </ligand>
</feature>
<feature type="binding site" evidence="1">
    <location>
        <position position="200"/>
    </location>
    <ligand>
        <name>ATP</name>
        <dbReference type="ChEBI" id="CHEBI:30616"/>
    </ligand>
</feature>
<feature type="binding site" evidence="1">
    <location>
        <position position="271"/>
    </location>
    <ligand>
        <name>Mg(2+)</name>
        <dbReference type="ChEBI" id="CHEBI:18420"/>
    </ligand>
</feature>
<feature type="binding site" evidence="1">
    <location>
        <position position="280"/>
    </location>
    <ligand>
        <name>ATP</name>
        <dbReference type="ChEBI" id="CHEBI:30616"/>
    </ligand>
</feature>
<feature type="binding site" evidence="1">
    <location>
        <position position="280"/>
    </location>
    <ligand>
        <name>Mg(2+)</name>
        <dbReference type="ChEBI" id="CHEBI:18420"/>
    </ligand>
</feature>
<reference key="1">
    <citation type="journal article" date="2005" name="Jpn. Agric. Res. Q.">
        <title>Genome sequence of Xanthomonas oryzae pv. oryzae suggests contribution of large numbers of effector genes and insertion sequences to its race diversity.</title>
        <authorList>
            <person name="Ochiai H."/>
            <person name="Inoue Y."/>
            <person name="Takeya M."/>
            <person name="Sasaki A."/>
            <person name="Kaku H."/>
        </authorList>
    </citation>
    <scope>NUCLEOTIDE SEQUENCE [LARGE SCALE GENOMIC DNA]</scope>
    <source>
        <strain>MAFF 311018</strain>
    </source>
</reference>